<organism>
    <name type="scientific">Azotobacter vinelandii</name>
    <dbReference type="NCBI Taxonomy" id="354"/>
    <lineage>
        <taxon>Bacteria</taxon>
        <taxon>Pseudomonadati</taxon>
        <taxon>Pseudomonadota</taxon>
        <taxon>Gammaproteobacteria</taxon>
        <taxon>Pseudomonadales</taxon>
        <taxon>Pseudomonadaceae</taxon>
        <taxon>Azotobacter</taxon>
    </lineage>
</organism>
<sequence>MASERLADGDSRYYLLKVAHEQFGCAPGELSEDQLQQADRIIGRQRHIEDAVLRSPDAIGVVIPPSQLEEAWAHIASRYESPEALQQALDAQALDAAGMRAMLARELRVEAVLDCVCAGLPEISDTDVSLYYFNHAEQFKVPAQHKAHILVTINEDFPENTREAARTRIETILKRLRGKPERFAEQAMKHSECPTAMQGGLLGEVVPGTLYPELDACLFQMARGELSPVLESPIGFHVLYCESVSPARQLTLEEILPRLRDRLQLRQRKAYQRKWLVCLLQQNATLENLAHG</sequence>
<dbReference type="EC" id="5.2.1.8"/>
<dbReference type="EMBL" id="M20568">
    <property type="protein sequence ID" value="AAA64732.1"/>
    <property type="molecule type" value="Genomic_DNA"/>
</dbReference>
<dbReference type="PIR" id="F32055">
    <property type="entry name" value="F32055"/>
</dbReference>
<dbReference type="SMR" id="P14890"/>
<dbReference type="GO" id="GO:0003755">
    <property type="term" value="F:peptidyl-prolyl cis-trans isomerase activity"/>
    <property type="evidence" value="ECO:0007669"/>
    <property type="project" value="UniProtKB-KW"/>
</dbReference>
<dbReference type="GO" id="GO:0009399">
    <property type="term" value="P:nitrogen fixation"/>
    <property type="evidence" value="ECO:0007669"/>
    <property type="project" value="UniProtKB-KW"/>
</dbReference>
<dbReference type="Gene3D" id="3.10.50.40">
    <property type="match status" value="1"/>
</dbReference>
<dbReference type="InterPro" id="IPR014282">
    <property type="entry name" value="Nitrogen_fix_NifM"/>
</dbReference>
<dbReference type="InterPro" id="IPR046357">
    <property type="entry name" value="PPIase_dom_sf"/>
</dbReference>
<dbReference type="InterPro" id="IPR000297">
    <property type="entry name" value="PPIase_PpiC"/>
</dbReference>
<dbReference type="InterPro" id="IPR023058">
    <property type="entry name" value="PPIase_PpiC_CS"/>
</dbReference>
<dbReference type="InterPro" id="IPR050245">
    <property type="entry name" value="PrsA_foldase"/>
</dbReference>
<dbReference type="InterPro" id="IPR027304">
    <property type="entry name" value="Trigger_fact/SurA_dom_sf"/>
</dbReference>
<dbReference type="NCBIfam" id="TIGR02933">
    <property type="entry name" value="nifM_nitrog"/>
    <property type="match status" value="1"/>
</dbReference>
<dbReference type="PANTHER" id="PTHR47245:SF2">
    <property type="entry name" value="PEPTIDYL-PROLYL CIS-TRANS ISOMERASE HP_0175-RELATED"/>
    <property type="match status" value="1"/>
</dbReference>
<dbReference type="PANTHER" id="PTHR47245">
    <property type="entry name" value="PEPTIDYLPROLYL ISOMERASE"/>
    <property type="match status" value="1"/>
</dbReference>
<dbReference type="Pfam" id="PF00639">
    <property type="entry name" value="Rotamase"/>
    <property type="match status" value="1"/>
</dbReference>
<dbReference type="SUPFAM" id="SSF54534">
    <property type="entry name" value="FKBP-like"/>
    <property type="match status" value="1"/>
</dbReference>
<dbReference type="SUPFAM" id="SSF109998">
    <property type="entry name" value="Triger factor/SurA peptide-binding domain-like"/>
    <property type="match status" value="1"/>
</dbReference>
<dbReference type="PROSITE" id="PS01096">
    <property type="entry name" value="PPIC_PPIASE_1"/>
    <property type="match status" value="1"/>
</dbReference>
<dbReference type="PROSITE" id="PS50198">
    <property type="entry name" value="PPIC_PPIASE_2"/>
    <property type="match status" value="1"/>
</dbReference>
<keyword id="KW-0413">Isomerase</keyword>
<keyword id="KW-0535">Nitrogen fixation</keyword>
<keyword id="KW-0697">Rotamase</keyword>
<proteinExistence type="inferred from homology"/>
<reference key="1">
    <citation type="journal article" date="1989" name="J. Bacteriol.">
        <title>Physical and genetic map of the major nif gene cluster from Azotobacter vinelandii.</title>
        <authorList>
            <person name="Jacobson M.R."/>
            <person name="Brigle K.E."/>
            <person name="Bennett L.T."/>
            <person name="Setterquist R.A."/>
            <person name="Wilson M.S."/>
            <person name="Cash V.L."/>
            <person name="Beynon J."/>
            <person name="Newton W.E."/>
            <person name="Dean D.R."/>
        </authorList>
    </citation>
    <scope>NUCLEOTIDE SEQUENCE [GENOMIC DNA]</scope>
    <source>
        <strain>ATCC 13705 / OP1 / DSM 366 / NCIMB 11614 / LMG 3878 / UW</strain>
    </source>
</reference>
<protein>
    <recommendedName>
        <fullName>Putative peptidyl-prolyl cis-trans isomerase NifM</fullName>
        <shortName>PPIase NifM</shortName>
        <ecNumber>5.2.1.8</ecNumber>
    </recommendedName>
    <alternativeName>
        <fullName>Rotamase NifM</fullName>
    </alternativeName>
</protein>
<evidence type="ECO:0000255" key="1">
    <source>
        <dbReference type="PROSITE-ProRule" id="PRU00278"/>
    </source>
</evidence>
<evidence type="ECO:0000305" key="2"/>
<gene>
    <name type="primary">nifM</name>
</gene>
<accession>P14890</accession>
<comment type="function">
    <text>Required for the activation and stabilization of the iron-component (NifH) of nitrogenase. Probable PPIase.</text>
</comment>
<comment type="catalytic activity">
    <reaction>
        <text>[protein]-peptidylproline (omega=180) = [protein]-peptidylproline (omega=0)</text>
        <dbReference type="Rhea" id="RHEA:16237"/>
        <dbReference type="Rhea" id="RHEA-COMP:10747"/>
        <dbReference type="Rhea" id="RHEA-COMP:10748"/>
        <dbReference type="ChEBI" id="CHEBI:83833"/>
        <dbReference type="ChEBI" id="CHEBI:83834"/>
        <dbReference type="EC" id="5.2.1.8"/>
    </reaction>
</comment>
<comment type="similarity">
    <text evidence="2">Belongs to the PpiC/parvulin rotamase family.</text>
</comment>
<name>NIFM_AZOVI</name>
<feature type="chain" id="PRO_0000193428" description="Putative peptidyl-prolyl cis-trans isomerase NifM">
    <location>
        <begin position="1"/>
        <end position="292"/>
    </location>
</feature>
<feature type="domain" description="PpiC" evidence="1">
    <location>
        <begin position="148"/>
        <end position="243"/>
    </location>
</feature>